<organism>
    <name type="scientific">Ictalurid herpesvirus 1 (strain Auburn)</name>
    <name type="common">IcHV-1</name>
    <name type="synonym">Channel catfish herpesvirus</name>
    <dbReference type="NCBI Taxonomy" id="766178"/>
    <lineage>
        <taxon>Viruses</taxon>
        <taxon>Duplodnaviria</taxon>
        <taxon>Heunggongvirae</taxon>
        <taxon>Peploviricota</taxon>
        <taxon>Herviviricetes</taxon>
        <taxon>Herpesvirales</taxon>
        <taxon>Alloherpesviridae</taxon>
        <taxon>Ictavirus</taxon>
        <taxon>Ictavirus ictaluridallo1</taxon>
        <taxon>Ictalurid herpesvirus 1</taxon>
    </lineage>
</organism>
<gene>
    <name type="primary">ORF7</name>
</gene>
<reference key="1">
    <citation type="journal article" date="1992" name="Virology">
        <title>Channel catfish virus: a new type of herpesvirus.</title>
        <authorList>
            <person name="Davison A.J."/>
        </authorList>
    </citation>
    <scope>NUCLEOTIDE SEQUENCE [LARGE SCALE GENOMIC DNA]</scope>
</reference>
<organismHost>
    <name type="scientific">Ictaluridae</name>
    <name type="common">bullhead catfishes</name>
    <dbReference type="NCBI Taxonomy" id="7996"/>
</organismHost>
<name>VG07_ICHVA</name>
<evidence type="ECO:0000255" key="1"/>
<evidence type="ECO:0000256" key="2">
    <source>
        <dbReference type="SAM" id="MobiDB-lite"/>
    </source>
</evidence>
<evidence type="ECO:0000305" key="3"/>
<protein>
    <recommendedName>
        <fullName>Putative membrane protein ORF7</fullName>
    </recommendedName>
</protein>
<sequence>MAAVILERAAEFVAPGEARVGYPILAEVYRALTSDHEMRAFYETCAVSFFALFMLIIWVLHASRHPEGSTTRGTDAHTQTEGSTTRGTDAHTQTEGSRDQGSMTPEADDLTRPPLGHGRQIPVLRRRMVLDRDLRIDYSL</sequence>
<feature type="chain" id="PRO_0000222093" description="Putative membrane protein ORF7">
    <location>
        <begin position="1"/>
        <end position="140"/>
    </location>
</feature>
<feature type="transmembrane region" description="Helical" evidence="1">
    <location>
        <begin position="44"/>
        <end position="60"/>
    </location>
</feature>
<feature type="region of interest" description="Disordered" evidence="2">
    <location>
        <begin position="66"/>
        <end position="118"/>
    </location>
</feature>
<feature type="compositionally biased region" description="Polar residues" evidence="2">
    <location>
        <begin position="68"/>
        <end position="103"/>
    </location>
</feature>
<keyword id="KW-0472">Membrane</keyword>
<keyword id="KW-1185">Reference proteome</keyword>
<keyword id="KW-0812">Transmembrane</keyword>
<keyword id="KW-1133">Transmembrane helix</keyword>
<accession>Q00133</accession>
<comment type="subcellular location">
    <subcellularLocation>
        <location evidence="3">Membrane</location>
        <topology evidence="3">Single-pass membrane protein</topology>
    </subcellularLocation>
</comment>
<proteinExistence type="predicted"/>
<dbReference type="EMBL" id="M75136">
    <property type="protein sequence ID" value="AAA88188.1"/>
    <property type="molecule type" value="Genomic_DNA"/>
</dbReference>
<dbReference type="EMBL" id="M75136">
    <property type="protein sequence ID" value="AAA88110.1"/>
    <property type="molecule type" value="Genomic_DNA"/>
</dbReference>
<dbReference type="PIR" id="H36786">
    <property type="entry name" value="MMBEI2"/>
</dbReference>
<dbReference type="KEGG" id="vg:1488392"/>
<dbReference type="KEGG" id="vg:1488428"/>
<dbReference type="Proteomes" id="UP000007643">
    <property type="component" value="Segment"/>
</dbReference>
<dbReference type="GO" id="GO:0016020">
    <property type="term" value="C:membrane"/>
    <property type="evidence" value="ECO:0007669"/>
    <property type="project" value="UniProtKB-SubCell"/>
</dbReference>